<organism>
    <name type="scientific">Pongo abelii</name>
    <name type="common">Sumatran orangutan</name>
    <name type="synonym">Pongo pygmaeus abelii</name>
    <dbReference type="NCBI Taxonomy" id="9601"/>
    <lineage>
        <taxon>Eukaryota</taxon>
        <taxon>Metazoa</taxon>
        <taxon>Chordata</taxon>
        <taxon>Craniata</taxon>
        <taxon>Vertebrata</taxon>
        <taxon>Euteleostomi</taxon>
        <taxon>Mammalia</taxon>
        <taxon>Eutheria</taxon>
        <taxon>Euarchontoglires</taxon>
        <taxon>Primates</taxon>
        <taxon>Haplorrhini</taxon>
        <taxon>Catarrhini</taxon>
        <taxon>Hominidae</taxon>
        <taxon>Pongo</taxon>
    </lineage>
</organism>
<gene>
    <name type="primary">UBE2V1</name>
</gene>
<dbReference type="EMBL" id="CR861091">
    <property type="protein sequence ID" value="CAH93170.1"/>
    <property type="molecule type" value="mRNA"/>
</dbReference>
<dbReference type="BMRB" id="Q5R4Z6"/>
<dbReference type="SMR" id="Q5R4Z6"/>
<dbReference type="FunCoup" id="Q5R4Z6">
    <property type="interactions" value="3244"/>
</dbReference>
<dbReference type="STRING" id="9601.ENSPPYP00000012429"/>
<dbReference type="eggNOG" id="KOG0896">
    <property type="taxonomic scope" value="Eukaryota"/>
</dbReference>
<dbReference type="eggNOG" id="KOG3011">
    <property type="taxonomic scope" value="Eukaryota"/>
</dbReference>
<dbReference type="InParanoid" id="Q5R4Z6"/>
<dbReference type="Proteomes" id="UP000001595">
    <property type="component" value="Unplaced"/>
</dbReference>
<dbReference type="GO" id="GO:0005634">
    <property type="term" value="C:nucleus"/>
    <property type="evidence" value="ECO:0007669"/>
    <property type="project" value="UniProtKB-SubCell"/>
</dbReference>
<dbReference type="GO" id="GO:0031372">
    <property type="term" value="C:UBC13-MMS2 complex"/>
    <property type="evidence" value="ECO:0000250"/>
    <property type="project" value="UniProtKB"/>
</dbReference>
<dbReference type="GO" id="GO:0000151">
    <property type="term" value="C:ubiquitin ligase complex"/>
    <property type="evidence" value="ECO:0000250"/>
    <property type="project" value="UniProtKB"/>
</dbReference>
<dbReference type="GO" id="GO:0070534">
    <property type="term" value="P:protein K63-linked ubiquitination"/>
    <property type="evidence" value="ECO:0000250"/>
    <property type="project" value="UniProtKB"/>
</dbReference>
<dbReference type="CDD" id="cd23807">
    <property type="entry name" value="UEV_UBE2V"/>
    <property type="match status" value="1"/>
</dbReference>
<dbReference type="FunFam" id="3.10.110.10:FF:000012">
    <property type="entry name" value="Ubiquitin-conjugating enzyme E2 variant 2"/>
    <property type="match status" value="1"/>
</dbReference>
<dbReference type="Gene3D" id="3.10.110.10">
    <property type="entry name" value="Ubiquitin Conjugating Enzyme"/>
    <property type="match status" value="1"/>
</dbReference>
<dbReference type="InterPro" id="IPR000608">
    <property type="entry name" value="UBQ-conjugat_E2_core"/>
</dbReference>
<dbReference type="InterPro" id="IPR016135">
    <property type="entry name" value="UBQ-conjugating_enzyme/RWD"/>
</dbReference>
<dbReference type="PANTHER" id="PTHR24068">
    <property type="entry name" value="UBIQUITIN-CONJUGATING ENZYME E2"/>
    <property type="match status" value="1"/>
</dbReference>
<dbReference type="Pfam" id="PF00179">
    <property type="entry name" value="UQ_con"/>
    <property type="match status" value="1"/>
</dbReference>
<dbReference type="SMART" id="SM00212">
    <property type="entry name" value="UBCc"/>
    <property type="match status" value="1"/>
</dbReference>
<dbReference type="SUPFAM" id="SSF54495">
    <property type="entry name" value="UBC-like"/>
    <property type="match status" value="1"/>
</dbReference>
<dbReference type="PROSITE" id="PS50127">
    <property type="entry name" value="UBC_2"/>
    <property type="match status" value="1"/>
</dbReference>
<name>UB2V1_PONAB</name>
<protein>
    <recommendedName>
        <fullName>Ubiquitin-conjugating enzyme E2 variant 1</fullName>
        <shortName>UEV-1</shortName>
    </recommendedName>
</protein>
<accession>Q5R4Z6</accession>
<comment type="function">
    <text evidence="1 2">Has no ubiquitin ligase activity on its own. The UBE2V1-UBE2N heterodimer catalyzes the synthesis of non-canonical poly-ubiquitin chains that are linked through 'Lys-63'. This type of poly-ubiquitination activates IKK and does not seem to involve protein degradation by the proteasome. Plays a role in the activation of NF-kappa-B mediated by IL1B, TNF, TRAF6 and TRAF2. Mediates transcriptional activation of target genes. Plays a role in the control of progress through the cell cycle and differentiation. Plays a role in the error-free DNA repair pathway and contributes to the survival of cells after DNA damage (By similarity). Promotes TRIM5 capsid-specific restriction activity and the UBE2V1-UBE2N heterodimer acts in concert with TRIM5 to generate 'Lys-63'-linked polyubiquitin chains which activate the MAP3K7/TAK1 complex which in turn results in the induction and expression of NF-kappa-B and MAPK-responsive inflammatory genes (By similarity). Together with RNF135 and UBE2N, catalyzes the viral RNA-dependent 'Lys-63'-linked polyubiquitination of RIGI to activate the downstream signaling pathway that leads to interferon beta production (By similarity). UBE2V1-UBE2N together with TRAF3IP2 E3 ubiquitin ligase mediate 'Lys-63'-linked polyubiquitination of TRAF6, a component of IL17A-mediated signaling pathway.</text>
</comment>
<comment type="subunit">
    <text evidence="1">Heterodimer with UBE2N. Interacts (UBE2V2-UBE2N heterodimer) with the E3 ligase STUB1 (via the U-box domain); the complex has a specific 'Lys-63'-linked polyubiquitination activity. Interacts with TRAF6 (By similarity).</text>
</comment>
<comment type="subcellular location">
    <subcellularLocation>
        <location evidence="1">Nucleus</location>
    </subcellularLocation>
    <text evidence="1">Excluded from the nucleolus.</text>
</comment>
<comment type="similarity">
    <text evidence="3">Belongs to the ubiquitin-conjugating enzyme family.</text>
</comment>
<proteinExistence type="evidence at transcript level"/>
<keyword id="KW-0007">Acetylation</keyword>
<keyword id="KW-0539">Nucleus</keyword>
<keyword id="KW-1185">Reference proteome</keyword>
<keyword id="KW-0833">Ubl conjugation pathway</keyword>
<sequence length="147" mass="16465">MAATMGSGVKVPRNFRLLEELEEGQKGVGDGTVSWGLEDDEDMTLTRWTGMIIGPPRTIYENRIYSLKIECGPKCPEAPPFVRFVTKINMNGVNSSNGVVDPRAISVLAKWQNSYSIKVVLQELRRLMMSKENMKLPQPPEGQCYSN</sequence>
<reference key="1">
    <citation type="submission" date="2005-06" db="EMBL/GenBank/DDBJ databases">
        <authorList>
            <consortium name="The German cDNA consortium"/>
        </authorList>
    </citation>
    <scope>NUCLEOTIDE SEQUENCE [LARGE SCALE MRNA]</scope>
    <source>
        <tissue>Brain cortex</tissue>
    </source>
</reference>
<evidence type="ECO:0000250" key="1"/>
<evidence type="ECO:0000250" key="2">
    <source>
        <dbReference type="UniProtKB" id="Q13404"/>
    </source>
</evidence>
<evidence type="ECO:0000255" key="3">
    <source>
        <dbReference type="PROSITE-ProRule" id="PRU00388"/>
    </source>
</evidence>
<feature type="initiator methionine" description="Removed" evidence="2">
    <location>
        <position position="1"/>
    </location>
</feature>
<feature type="chain" id="PRO_0000292583" description="Ubiquitin-conjugating enzyme E2 variant 1">
    <location>
        <begin position="2"/>
        <end position="147"/>
    </location>
</feature>
<feature type="domain" description="UBC core" evidence="3">
    <location>
        <begin position="12"/>
        <end position="147"/>
    </location>
</feature>
<feature type="modified residue" description="N-acetylalanine" evidence="2">
    <location>
        <position position="2"/>
    </location>
</feature>